<name>GLNE_SALTY</name>
<dbReference type="EC" id="2.7.7.89" evidence="1"/>
<dbReference type="EC" id="2.7.7.42" evidence="1"/>
<dbReference type="EMBL" id="AE006468">
    <property type="protein sequence ID" value="AAL22075.1"/>
    <property type="molecule type" value="Genomic_DNA"/>
</dbReference>
<dbReference type="RefSeq" id="NP_462116.1">
    <property type="nucleotide sequence ID" value="NC_003197.2"/>
</dbReference>
<dbReference type="RefSeq" id="WP_000188309.1">
    <property type="nucleotide sequence ID" value="NC_003197.2"/>
</dbReference>
<dbReference type="SMR" id="Q8ZLY6"/>
<dbReference type="STRING" id="99287.STM3201"/>
<dbReference type="PaxDb" id="99287-STM3201"/>
<dbReference type="GeneID" id="1254724"/>
<dbReference type="KEGG" id="stm:STM3201"/>
<dbReference type="PATRIC" id="fig|99287.12.peg.3396"/>
<dbReference type="HOGENOM" id="CLU_006233_0_1_6"/>
<dbReference type="OMA" id="EFMVQYA"/>
<dbReference type="PhylomeDB" id="Q8ZLY6"/>
<dbReference type="BioCyc" id="SENT99287:STM3201-MONOMER"/>
<dbReference type="Proteomes" id="UP000001014">
    <property type="component" value="Chromosome"/>
</dbReference>
<dbReference type="GO" id="GO:0005829">
    <property type="term" value="C:cytosol"/>
    <property type="evidence" value="ECO:0000318"/>
    <property type="project" value="GO_Central"/>
</dbReference>
<dbReference type="GO" id="GO:0008882">
    <property type="term" value="F:[glutamate-ammonia-ligase] adenylyltransferase activity"/>
    <property type="evidence" value="ECO:0000318"/>
    <property type="project" value="GO_Central"/>
</dbReference>
<dbReference type="GO" id="GO:0047388">
    <property type="term" value="F:[glutamine synthetase]-adenylyl-L-tyrosine phosphorylase activity"/>
    <property type="evidence" value="ECO:0007669"/>
    <property type="project" value="UniProtKB-EC"/>
</dbReference>
<dbReference type="GO" id="GO:0005524">
    <property type="term" value="F:ATP binding"/>
    <property type="evidence" value="ECO:0007669"/>
    <property type="project" value="UniProtKB-UniRule"/>
</dbReference>
<dbReference type="GO" id="GO:0000287">
    <property type="term" value="F:magnesium ion binding"/>
    <property type="evidence" value="ECO:0007669"/>
    <property type="project" value="UniProtKB-UniRule"/>
</dbReference>
<dbReference type="GO" id="GO:0000820">
    <property type="term" value="P:regulation of glutamine family amino acid metabolic process"/>
    <property type="evidence" value="ECO:0000318"/>
    <property type="project" value="GO_Central"/>
</dbReference>
<dbReference type="CDD" id="cd05401">
    <property type="entry name" value="NT_GlnE_GlnD_like"/>
    <property type="match status" value="2"/>
</dbReference>
<dbReference type="FunFam" id="1.10.4050.10:FF:000001">
    <property type="entry name" value="Bifunctional glutamine synthetase adenylyltransferase/adenylyl-removing enzyme"/>
    <property type="match status" value="1"/>
</dbReference>
<dbReference type="FunFam" id="1.20.120.1510:FF:000001">
    <property type="entry name" value="Bifunctional glutamine synthetase adenylyltransferase/adenylyl-removing enzyme"/>
    <property type="match status" value="1"/>
</dbReference>
<dbReference type="FunFam" id="1.20.120.330:FF:000005">
    <property type="entry name" value="Bifunctional glutamine synthetase adenylyltransferase/adenylyl-removing enzyme"/>
    <property type="match status" value="1"/>
</dbReference>
<dbReference type="FunFam" id="1.20.120.330:FF:000008">
    <property type="entry name" value="Bifunctional glutamine synthetase adenylyltransferase/adenylyl-removing enzyme"/>
    <property type="match status" value="1"/>
</dbReference>
<dbReference type="FunFam" id="3.30.460.10:FF:000009">
    <property type="entry name" value="Bifunctional glutamine synthetase adenylyltransferase/adenylyl-removing enzyme"/>
    <property type="match status" value="1"/>
</dbReference>
<dbReference type="FunFam" id="3.30.460.10:FF:000014">
    <property type="entry name" value="Bifunctional glutamine synthetase adenylyltransferase/adenylyl-removing enzyme"/>
    <property type="match status" value="1"/>
</dbReference>
<dbReference type="Gene3D" id="1.20.120.1510">
    <property type="match status" value="1"/>
</dbReference>
<dbReference type="Gene3D" id="3.30.460.10">
    <property type="entry name" value="Beta Polymerase, domain 2"/>
    <property type="match status" value="2"/>
</dbReference>
<dbReference type="Gene3D" id="1.10.4050.10">
    <property type="entry name" value="Glutamine synthase adenylyltransferase GlnE"/>
    <property type="match status" value="1"/>
</dbReference>
<dbReference type="Gene3D" id="1.20.120.330">
    <property type="entry name" value="Nucleotidyltransferases domain 2"/>
    <property type="match status" value="2"/>
</dbReference>
<dbReference type="HAMAP" id="MF_00802">
    <property type="entry name" value="GlnE"/>
    <property type="match status" value="1"/>
</dbReference>
<dbReference type="InterPro" id="IPR023057">
    <property type="entry name" value="GlnE"/>
</dbReference>
<dbReference type="InterPro" id="IPR005190">
    <property type="entry name" value="GlnE_rpt_dom"/>
</dbReference>
<dbReference type="InterPro" id="IPR043519">
    <property type="entry name" value="NT_sf"/>
</dbReference>
<dbReference type="InterPro" id="IPR013546">
    <property type="entry name" value="PII_UdlTrfase/GS_AdlTrfase"/>
</dbReference>
<dbReference type="NCBIfam" id="NF008292">
    <property type="entry name" value="PRK11072.1"/>
    <property type="match status" value="1"/>
</dbReference>
<dbReference type="PANTHER" id="PTHR30621:SF0">
    <property type="entry name" value="BIFUNCTIONAL GLUTAMINE SYNTHETASE ADENYLYLTRANSFERASE_ADENYLYL-REMOVING ENZYME"/>
    <property type="match status" value="1"/>
</dbReference>
<dbReference type="PANTHER" id="PTHR30621">
    <property type="entry name" value="GLUTAMINE SYNTHETASE ADENYLYLTRANSFERASE"/>
    <property type="match status" value="1"/>
</dbReference>
<dbReference type="Pfam" id="PF08335">
    <property type="entry name" value="GlnD_UR_UTase"/>
    <property type="match status" value="2"/>
</dbReference>
<dbReference type="Pfam" id="PF03710">
    <property type="entry name" value="GlnE"/>
    <property type="match status" value="2"/>
</dbReference>
<dbReference type="SUPFAM" id="SSF81301">
    <property type="entry name" value="Nucleotidyltransferase"/>
    <property type="match status" value="2"/>
</dbReference>
<dbReference type="SUPFAM" id="SSF81593">
    <property type="entry name" value="Nucleotidyltransferase substrate binding subunit/domain"/>
    <property type="match status" value="2"/>
</dbReference>
<proteinExistence type="inferred from homology"/>
<accession>Q8ZLY6</accession>
<sequence length="947" mass="108037">MTPLSSPLSQYWQTVVERLPEGFTETSLSVQAKSVLTFSDFALDSVIAHPEWLAELESASPQADEWRHYAGWLQEALAGVCDDASLMRELRFFRRRIMVRIAWAQTLSLVDDETILQQLSHLAETLIVGARDWLYAACCREWGTPCNPQGVPQPLLILGMGKLGGGELNFSSDIDLIFAWPEHGETRGGRRELDNAQFFTRLGQRLIKALDQPTMDGFVYRVDMRLRPFGDSGPLVLSFAALEDYYQEQGRDWERYAMVKARLMGDNDDAWSRELRAMLRPFVFRRYIDFSVIQSLRNMKGMIAREVRRRGLKDNIKLGAGGIREIEFIVQVFQLIRGGREPSLQSRSLLPTLDAIAALHLLPENDVAQLRVAYLFLRRLENLLQSINDEQTQTLPADDLNRARLAWGMKAENWPQLVGELTDHMANVRRVFNELIGDDEADTPQEEERSEPWREVWQDALQEDDSTPVLAHLADEERRQVLTLIADFRKELDKRPIGPRGRQVLDQLMPHLLADVCSREDAAVTLSRITPLLAGIVTRTTYLELLSEFPGALKHLIMLCAASPMIASQLARYPLLLDELLDPGTLYQPTATDAYRDELRQYLLRVPEEDEEQQLEALRQFKQAQLLRIAAADIAGTLPVMKVSDHLTWLAEAMIDAVVQQAWTQMVARYGQPAHLDERQGRGFAVVGYGKLGGWELGYSSDLDLIFLHDCPMDVMTNGEREIDGRQFYLRLAQRIMHLFSTRTSSGILYEVDARLRPSGAAGMLVTSADAFADYQQHEAWTWEHQALVRARVVYGDPQLTSQFDAVRRTIMTTARDGKTLQTEVREMREKMRAHLGNKHRDRFDIKADEGGITDIEFIAQYLVLRYAHEKPKLTRWSDNVRILELLAQNGIMDEHEAQALTVAYTTLRDELHHLALQELPGHVAQTCFSKERALVQASWRKWLVAV</sequence>
<organism>
    <name type="scientific">Salmonella typhimurium (strain LT2 / SGSC1412 / ATCC 700720)</name>
    <dbReference type="NCBI Taxonomy" id="99287"/>
    <lineage>
        <taxon>Bacteria</taxon>
        <taxon>Pseudomonadati</taxon>
        <taxon>Pseudomonadota</taxon>
        <taxon>Gammaproteobacteria</taxon>
        <taxon>Enterobacterales</taxon>
        <taxon>Enterobacteriaceae</taxon>
        <taxon>Salmonella</taxon>
    </lineage>
</organism>
<gene>
    <name evidence="1" type="primary">glnE</name>
    <name type="ordered locus">STM3201</name>
</gene>
<reference key="1">
    <citation type="journal article" date="2001" name="Nature">
        <title>Complete genome sequence of Salmonella enterica serovar Typhimurium LT2.</title>
        <authorList>
            <person name="McClelland M."/>
            <person name="Sanderson K.E."/>
            <person name="Spieth J."/>
            <person name="Clifton S.W."/>
            <person name="Latreille P."/>
            <person name="Courtney L."/>
            <person name="Porwollik S."/>
            <person name="Ali J."/>
            <person name="Dante M."/>
            <person name="Du F."/>
            <person name="Hou S."/>
            <person name="Layman D."/>
            <person name="Leonard S."/>
            <person name="Nguyen C."/>
            <person name="Scott K."/>
            <person name="Holmes A."/>
            <person name="Grewal N."/>
            <person name="Mulvaney E."/>
            <person name="Ryan E."/>
            <person name="Sun H."/>
            <person name="Florea L."/>
            <person name="Miller W."/>
            <person name="Stoneking T."/>
            <person name="Nhan M."/>
            <person name="Waterston R."/>
            <person name="Wilson R.K."/>
        </authorList>
    </citation>
    <scope>NUCLEOTIDE SEQUENCE [LARGE SCALE GENOMIC DNA]</scope>
    <source>
        <strain>LT2 / SGSC1412 / ATCC 700720</strain>
    </source>
</reference>
<evidence type="ECO:0000255" key="1">
    <source>
        <dbReference type="HAMAP-Rule" id="MF_00802"/>
    </source>
</evidence>
<comment type="function">
    <text evidence="1">Involved in the regulation of glutamine synthetase GlnA, a key enzyme in the process to assimilate ammonia. When cellular nitrogen levels are high, the C-terminal adenylyl transferase (AT) inactivates GlnA by covalent transfer of an adenylyl group from ATP to specific tyrosine residue of GlnA, thus reducing its activity. Conversely, when nitrogen levels are low, the N-terminal adenylyl removase (AR) activates GlnA by removing the adenylyl group by phosphorolysis, increasing its activity. The regulatory region of GlnE binds the signal transduction protein PII (GlnB) which indicates the nitrogen status of the cell.</text>
</comment>
<comment type="catalytic activity">
    <reaction evidence="1">
        <text>[glutamine synthetase]-O(4)-(5'-adenylyl)-L-tyrosine + phosphate = [glutamine synthetase]-L-tyrosine + ADP</text>
        <dbReference type="Rhea" id="RHEA:43716"/>
        <dbReference type="Rhea" id="RHEA-COMP:10660"/>
        <dbReference type="Rhea" id="RHEA-COMP:10661"/>
        <dbReference type="ChEBI" id="CHEBI:43474"/>
        <dbReference type="ChEBI" id="CHEBI:46858"/>
        <dbReference type="ChEBI" id="CHEBI:83624"/>
        <dbReference type="ChEBI" id="CHEBI:456216"/>
        <dbReference type="EC" id="2.7.7.89"/>
    </reaction>
</comment>
<comment type="catalytic activity">
    <reaction evidence="1">
        <text>[glutamine synthetase]-L-tyrosine + ATP = [glutamine synthetase]-O(4)-(5'-adenylyl)-L-tyrosine + diphosphate</text>
        <dbReference type="Rhea" id="RHEA:18589"/>
        <dbReference type="Rhea" id="RHEA-COMP:10660"/>
        <dbReference type="Rhea" id="RHEA-COMP:10661"/>
        <dbReference type="ChEBI" id="CHEBI:30616"/>
        <dbReference type="ChEBI" id="CHEBI:33019"/>
        <dbReference type="ChEBI" id="CHEBI:46858"/>
        <dbReference type="ChEBI" id="CHEBI:83624"/>
        <dbReference type="EC" id="2.7.7.42"/>
    </reaction>
</comment>
<comment type="cofactor">
    <cofactor evidence="1">
        <name>Mg(2+)</name>
        <dbReference type="ChEBI" id="CHEBI:18420"/>
    </cofactor>
</comment>
<comment type="similarity">
    <text evidence="1">Belongs to the GlnE family.</text>
</comment>
<feature type="chain" id="PRO_0000209276" description="Bifunctional glutamine synthetase adenylyltransferase/adenylyl-removing enzyme">
    <location>
        <begin position="1"/>
        <end position="947"/>
    </location>
</feature>
<feature type="region of interest" description="Adenylyl removase" evidence="1">
    <location>
        <begin position="1"/>
        <end position="440"/>
    </location>
</feature>
<feature type="region of interest" description="Adenylyl transferase" evidence="1">
    <location>
        <begin position="450"/>
        <end position="947"/>
    </location>
</feature>
<protein>
    <recommendedName>
        <fullName evidence="1">Bifunctional glutamine synthetase adenylyltransferase/adenylyl-removing enzyme</fullName>
    </recommendedName>
    <alternativeName>
        <fullName evidence="1">ATP:glutamine synthetase adenylyltransferase</fullName>
    </alternativeName>
    <alternativeName>
        <fullName evidence="1">ATase</fullName>
    </alternativeName>
    <domain>
        <recommendedName>
            <fullName evidence="1">Glutamine synthetase adenylyl-L-tyrosine phosphorylase</fullName>
            <ecNumber evidence="1">2.7.7.89</ecNumber>
        </recommendedName>
        <alternativeName>
            <fullName evidence="1">Adenylyl removase</fullName>
            <shortName evidence="1">AR</shortName>
            <shortName evidence="1">AT-N</shortName>
        </alternativeName>
    </domain>
    <domain>
        <recommendedName>
            <fullName evidence="1">Glutamine synthetase adenylyl transferase</fullName>
            <ecNumber evidence="1">2.7.7.42</ecNumber>
        </recommendedName>
        <alternativeName>
            <fullName evidence="1">Adenylyl transferase</fullName>
            <shortName evidence="1">AT</shortName>
            <shortName evidence="1">AT-C</shortName>
        </alternativeName>
    </domain>
</protein>
<keyword id="KW-0067">ATP-binding</keyword>
<keyword id="KW-0460">Magnesium</keyword>
<keyword id="KW-0511">Multifunctional enzyme</keyword>
<keyword id="KW-0547">Nucleotide-binding</keyword>
<keyword id="KW-0548">Nucleotidyltransferase</keyword>
<keyword id="KW-1185">Reference proteome</keyword>
<keyword id="KW-0808">Transferase</keyword>